<evidence type="ECO:0000255" key="1">
    <source>
        <dbReference type="HAMAP-Rule" id="MF_01394"/>
    </source>
</evidence>
<comment type="function">
    <text evidence="1">NDH-1 shuttles electrons from NADH, via FMN and iron-sulfur (Fe-S) centers, to quinones in the respiratory chain. The immediate electron acceptor for the enzyme in this species is believed to be a menaquinone. Couples the redox reaction to proton translocation (for every two electrons transferred, four hydrogen ions are translocated across the cytoplasmic membrane), and thus conserves the redox energy in a proton gradient.</text>
</comment>
<comment type="catalytic activity">
    <reaction evidence="1">
        <text>a quinone + NADH + 5 H(+)(in) = a quinol + NAD(+) + 4 H(+)(out)</text>
        <dbReference type="Rhea" id="RHEA:57888"/>
        <dbReference type="ChEBI" id="CHEBI:15378"/>
        <dbReference type="ChEBI" id="CHEBI:24646"/>
        <dbReference type="ChEBI" id="CHEBI:57540"/>
        <dbReference type="ChEBI" id="CHEBI:57945"/>
        <dbReference type="ChEBI" id="CHEBI:132124"/>
    </reaction>
</comment>
<comment type="subunit">
    <text evidence="1">NDH-1 is composed of 14 different subunits. Subunits NuoA, H, J, K, L, M, N constitute the membrane sector of the complex.</text>
</comment>
<comment type="subcellular location">
    <subcellularLocation>
        <location evidence="1">Cell inner membrane</location>
        <topology evidence="1">Multi-pass membrane protein</topology>
    </subcellularLocation>
</comment>
<comment type="similarity">
    <text evidence="1">Belongs to the complex I subunit 3 family.</text>
</comment>
<accession>Q5LH48</accession>
<proteinExistence type="inferred from homology"/>
<sequence length="116" mass="13089">MNFTLLVVVLLTAIAFVGVVIALSNAISPRSYNAQKFEAYECGIPTRGKSWMQFRVGYYLFAILFLMFDVETVFLFPWAVIARDLGPQGLISILFFLVVLVLGLAYAWKKGALEWK</sequence>
<organism>
    <name type="scientific">Bacteroides fragilis (strain ATCC 25285 / DSM 2151 / CCUG 4856 / JCM 11019 / LMG 10263 / NCTC 9343 / Onslow / VPI 2553 / EN-2)</name>
    <dbReference type="NCBI Taxonomy" id="272559"/>
    <lineage>
        <taxon>Bacteria</taxon>
        <taxon>Pseudomonadati</taxon>
        <taxon>Bacteroidota</taxon>
        <taxon>Bacteroidia</taxon>
        <taxon>Bacteroidales</taxon>
        <taxon>Bacteroidaceae</taxon>
        <taxon>Bacteroides</taxon>
    </lineage>
</organism>
<reference key="1">
    <citation type="journal article" date="2005" name="Science">
        <title>Extensive DNA inversions in the B. fragilis genome control variable gene expression.</title>
        <authorList>
            <person name="Cerdeno-Tarraga A.-M."/>
            <person name="Patrick S."/>
            <person name="Crossman L.C."/>
            <person name="Blakely G."/>
            <person name="Abratt V."/>
            <person name="Lennard N."/>
            <person name="Poxton I."/>
            <person name="Duerden B."/>
            <person name="Harris B."/>
            <person name="Quail M.A."/>
            <person name="Barron A."/>
            <person name="Clark L."/>
            <person name="Corton C."/>
            <person name="Doggett J."/>
            <person name="Holden M.T.G."/>
            <person name="Larke N."/>
            <person name="Line A."/>
            <person name="Lord A."/>
            <person name="Norbertczak H."/>
            <person name="Ormond D."/>
            <person name="Price C."/>
            <person name="Rabbinowitsch E."/>
            <person name="Woodward J."/>
            <person name="Barrell B.G."/>
            <person name="Parkhill J."/>
        </authorList>
    </citation>
    <scope>NUCLEOTIDE SEQUENCE [LARGE SCALE GENOMIC DNA]</scope>
    <source>
        <strain>ATCC 25285 / DSM 2151 / CCUG 4856 / JCM 11019 / LMG 10263 / NCTC 9343 / Onslow / VPI 2553 / EN-2</strain>
    </source>
</reference>
<keyword id="KW-0997">Cell inner membrane</keyword>
<keyword id="KW-1003">Cell membrane</keyword>
<keyword id="KW-0472">Membrane</keyword>
<keyword id="KW-0520">NAD</keyword>
<keyword id="KW-0874">Quinone</keyword>
<keyword id="KW-1278">Translocase</keyword>
<keyword id="KW-0812">Transmembrane</keyword>
<keyword id="KW-1133">Transmembrane helix</keyword>
<keyword id="KW-0813">Transport</keyword>
<feature type="chain" id="PRO_0000362627" description="NADH-quinone oxidoreductase subunit A">
    <location>
        <begin position="1"/>
        <end position="116"/>
    </location>
</feature>
<feature type="transmembrane region" description="Helical" evidence="1">
    <location>
        <begin position="3"/>
        <end position="23"/>
    </location>
</feature>
<feature type="transmembrane region" description="Helical" evidence="1">
    <location>
        <begin position="61"/>
        <end position="81"/>
    </location>
</feature>
<feature type="transmembrane region" description="Helical" evidence="1">
    <location>
        <begin position="88"/>
        <end position="108"/>
    </location>
</feature>
<gene>
    <name evidence="1" type="primary">nuoA</name>
    <name type="ordered locus">BF0792</name>
</gene>
<protein>
    <recommendedName>
        <fullName evidence="1">NADH-quinone oxidoreductase subunit A</fullName>
        <ecNumber evidence="1">7.1.1.-</ecNumber>
    </recommendedName>
    <alternativeName>
        <fullName evidence="1">NADH dehydrogenase I subunit A</fullName>
    </alternativeName>
    <alternativeName>
        <fullName evidence="1">NDH-1 subunit A</fullName>
    </alternativeName>
    <alternativeName>
        <fullName evidence="1">NUO1</fullName>
    </alternativeName>
</protein>
<name>NUOA_BACFN</name>
<dbReference type="EC" id="7.1.1.-" evidence="1"/>
<dbReference type="EMBL" id="CR626927">
    <property type="protein sequence ID" value="CAH06538.1"/>
    <property type="molecule type" value="Genomic_DNA"/>
</dbReference>
<dbReference type="RefSeq" id="WP_005775585.1">
    <property type="nucleotide sequence ID" value="NZ_UFTH01000001.1"/>
</dbReference>
<dbReference type="SMR" id="Q5LH48"/>
<dbReference type="PaxDb" id="272559-BF9343_0757"/>
<dbReference type="DNASU" id="3288149"/>
<dbReference type="KEGG" id="bfs:BF9343_0757"/>
<dbReference type="eggNOG" id="COG0838">
    <property type="taxonomic scope" value="Bacteria"/>
</dbReference>
<dbReference type="HOGENOM" id="CLU_119549_1_2_10"/>
<dbReference type="Proteomes" id="UP000006731">
    <property type="component" value="Chromosome"/>
</dbReference>
<dbReference type="GO" id="GO:0030964">
    <property type="term" value="C:NADH dehydrogenase complex"/>
    <property type="evidence" value="ECO:0007669"/>
    <property type="project" value="TreeGrafter"/>
</dbReference>
<dbReference type="GO" id="GO:0005886">
    <property type="term" value="C:plasma membrane"/>
    <property type="evidence" value="ECO:0007669"/>
    <property type="project" value="UniProtKB-SubCell"/>
</dbReference>
<dbReference type="GO" id="GO:0008137">
    <property type="term" value="F:NADH dehydrogenase (ubiquinone) activity"/>
    <property type="evidence" value="ECO:0007669"/>
    <property type="project" value="InterPro"/>
</dbReference>
<dbReference type="GO" id="GO:0050136">
    <property type="term" value="F:NADH:ubiquinone reductase (non-electrogenic) activity"/>
    <property type="evidence" value="ECO:0007669"/>
    <property type="project" value="UniProtKB-UniRule"/>
</dbReference>
<dbReference type="GO" id="GO:0048038">
    <property type="term" value="F:quinone binding"/>
    <property type="evidence" value="ECO:0007669"/>
    <property type="project" value="UniProtKB-KW"/>
</dbReference>
<dbReference type="FunFam" id="1.20.58.1610:FF:000008">
    <property type="entry name" value="NADH-quinone oxidoreductase subunit A"/>
    <property type="match status" value="1"/>
</dbReference>
<dbReference type="Gene3D" id="1.20.58.1610">
    <property type="entry name" value="NADH:ubiquinone/plastoquinone oxidoreductase, chain 3"/>
    <property type="match status" value="1"/>
</dbReference>
<dbReference type="HAMAP" id="MF_01394">
    <property type="entry name" value="NDH1_NuoA"/>
    <property type="match status" value="1"/>
</dbReference>
<dbReference type="InterPro" id="IPR023043">
    <property type="entry name" value="NAD(P)H_OxRDtase_bac/plastid"/>
</dbReference>
<dbReference type="InterPro" id="IPR000440">
    <property type="entry name" value="NADH_UbQ/plastoQ_OxRdtase_su3"/>
</dbReference>
<dbReference type="InterPro" id="IPR038430">
    <property type="entry name" value="NDAH_ubi_oxred_su3_sf"/>
</dbReference>
<dbReference type="PANTHER" id="PTHR11058:SF22">
    <property type="entry name" value="NADH-QUINONE OXIDOREDUCTASE SUBUNIT A"/>
    <property type="match status" value="1"/>
</dbReference>
<dbReference type="PANTHER" id="PTHR11058">
    <property type="entry name" value="NADH-UBIQUINONE OXIDOREDUCTASE CHAIN 3"/>
    <property type="match status" value="1"/>
</dbReference>
<dbReference type="Pfam" id="PF00507">
    <property type="entry name" value="Oxidored_q4"/>
    <property type="match status" value="1"/>
</dbReference>